<reference key="1">
    <citation type="journal article" date="2004" name="Mol. Phylogenet. Evol.">
        <title>Phylogeny of Panax using chloroplast trnC-trnD intergenic region and the utility of trnC-trnD in interspecific studies of plants.</title>
        <authorList>
            <person name="Lee C."/>
            <person name="Wen J."/>
        </authorList>
    </citation>
    <scope>NUCLEOTIDE SEQUENCE [GENOMIC DNA]</scope>
</reference>
<organism>
    <name type="scientific">Aralia elata</name>
    <name type="common">Japanese angelica tree</name>
    <dbReference type="NCBI Taxonomy" id="82095"/>
    <lineage>
        <taxon>Eukaryota</taxon>
        <taxon>Viridiplantae</taxon>
        <taxon>Streptophyta</taxon>
        <taxon>Embryophyta</taxon>
        <taxon>Tracheophyta</taxon>
        <taxon>Spermatophyta</taxon>
        <taxon>Magnoliopsida</taxon>
        <taxon>eudicotyledons</taxon>
        <taxon>Gunneridae</taxon>
        <taxon>Pentapetalae</taxon>
        <taxon>asterids</taxon>
        <taxon>campanulids</taxon>
        <taxon>Apiales</taxon>
        <taxon>Araliaceae</taxon>
        <taxon>Aralia</taxon>
    </lineage>
</organism>
<evidence type="ECO:0000255" key="1">
    <source>
        <dbReference type="HAMAP-Rule" id="MF_00438"/>
    </source>
</evidence>
<name>PSBM_ARAEL</name>
<accession>Q7YNV4</accession>
<dbReference type="EMBL" id="AY275914">
    <property type="protein sequence ID" value="AAP34562.1"/>
    <property type="molecule type" value="Genomic_DNA"/>
</dbReference>
<dbReference type="RefSeq" id="YP_010600524.1">
    <property type="nucleotide sequence ID" value="NC_069842.1"/>
</dbReference>
<dbReference type="SMR" id="Q7YNV4"/>
<dbReference type="GeneID" id="77611770"/>
<dbReference type="GO" id="GO:0009535">
    <property type="term" value="C:chloroplast thylakoid membrane"/>
    <property type="evidence" value="ECO:0007669"/>
    <property type="project" value="UniProtKB-SubCell"/>
</dbReference>
<dbReference type="GO" id="GO:0009523">
    <property type="term" value="C:photosystem II"/>
    <property type="evidence" value="ECO:0007669"/>
    <property type="project" value="UniProtKB-KW"/>
</dbReference>
<dbReference type="GO" id="GO:0019684">
    <property type="term" value="P:photosynthesis, light reaction"/>
    <property type="evidence" value="ECO:0007669"/>
    <property type="project" value="InterPro"/>
</dbReference>
<dbReference type="HAMAP" id="MF_00438">
    <property type="entry name" value="PSII_PsbM"/>
    <property type="match status" value="1"/>
</dbReference>
<dbReference type="InterPro" id="IPR007826">
    <property type="entry name" value="PSII_PsbM"/>
</dbReference>
<dbReference type="InterPro" id="IPR037269">
    <property type="entry name" value="PSII_PsbM_sf"/>
</dbReference>
<dbReference type="NCBIfam" id="TIGR03038">
    <property type="entry name" value="PS_II_psbM"/>
    <property type="match status" value="1"/>
</dbReference>
<dbReference type="PANTHER" id="PTHR35774">
    <property type="entry name" value="PHOTOSYSTEM II REACTION CENTER PROTEIN M"/>
    <property type="match status" value="1"/>
</dbReference>
<dbReference type="PANTHER" id="PTHR35774:SF1">
    <property type="entry name" value="PHOTOSYSTEM II REACTION CENTER PROTEIN M"/>
    <property type="match status" value="1"/>
</dbReference>
<dbReference type="Pfam" id="PF05151">
    <property type="entry name" value="PsbM"/>
    <property type="match status" value="1"/>
</dbReference>
<dbReference type="SUPFAM" id="SSF161033">
    <property type="entry name" value="Photosystem II reaction center protein M, PsbM"/>
    <property type="match status" value="1"/>
</dbReference>
<proteinExistence type="inferred from homology"/>
<sequence>MEVNILAFIATALFILVPTAFLLIIYVKTESQNKK</sequence>
<geneLocation type="chloroplast"/>
<keyword id="KW-0150">Chloroplast</keyword>
<keyword id="KW-0472">Membrane</keyword>
<keyword id="KW-0602">Photosynthesis</keyword>
<keyword id="KW-0604">Photosystem II</keyword>
<keyword id="KW-0934">Plastid</keyword>
<keyword id="KW-0674">Reaction center</keyword>
<keyword id="KW-0793">Thylakoid</keyword>
<keyword id="KW-0812">Transmembrane</keyword>
<keyword id="KW-1133">Transmembrane helix</keyword>
<protein>
    <recommendedName>
        <fullName evidence="1">Photosystem II reaction center protein M</fullName>
        <shortName evidence="1">PSII-M</shortName>
    </recommendedName>
</protein>
<feature type="chain" id="PRO_0000217548" description="Photosystem II reaction center protein M">
    <location>
        <begin position="1"/>
        <end position="35"/>
    </location>
</feature>
<feature type="transmembrane region" description="Helical" evidence="1">
    <location>
        <begin position="5"/>
        <end position="25"/>
    </location>
</feature>
<gene>
    <name evidence="1" type="primary">psbM</name>
</gene>
<comment type="function">
    <text evidence="1">One of the components of the core complex of photosystem II (PSII). PSII is a light-driven water:plastoquinone oxidoreductase that uses light energy to abstract electrons from H(2)O, generating O(2) and a proton gradient subsequently used for ATP formation. It consists of a core antenna complex that captures photons, and an electron transfer chain that converts photonic excitation into a charge separation. This subunit is found at the monomer-monomer interface.</text>
</comment>
<comment type="subunit">
    <text evidence="1">PSII is composed of 1 copy each of membrane proteins PsbA, PsbB, PsbC, PsbD, PsbE, PsbF, PsbH, PsbI, PsbJ, PsbK, PsbL, PsbM, PsbT, PsbX, PsbY, PsbZ, Psb30/Ycf12, at least 3 peripheral proteins of the oxygen-evolving complex and a large number of cofactors. It forms dimeric complexes.</text>
</comment>
<comment type="subcellular location">
    <subcellularLocation>
        <location evidence="1">Plastid</location>
        <location evidence="1">Chloroplast thylakoid membrane</location>
        <topology evidence="1">Single-pass membrane protein</topology>
    </subcellularLocation>
</comment>
<comment type="similarity">
    <text evidence="1">Belongs to the PsbM family.</text>
</comment>